<comment type="function">
    <text evidence="5">Catalyzes the O-sulfation of tyrosine residues within acidic motifs of polypeptides, using 3'-phosphoadenylyl sulfate (PAPS) as cosubstrate.</text>
</comment>
<comment type="catalytic activity">
    <reaction evidence="5">
        <text>L-tyrosyl-[protein] + 3'-phosphoadenylyl sulfate = O-sulfo-L-tyrosine-[protein] + adenosine 3',5'-bisphosphate + H(+)</text>
        <dbReference type="Rhea" id="RHEA:16801"/>
        <dbReference type="Rhea" id="RHEA-COMP:10136"/>
        <dbReference type="Rhea" id="RHEA-COMP:11688"/>
        <dbReference type="ChEBI" id="CHEBI:15378"/>
        <dbReference type="ChEBI" id="CHEBI:46858"/>
        <dbReference type="ChEBI" id="CHEBI:58339"/>
        <dbReference type="ChEBI" id="CHEBI:58343"/>
        <dbReference type="ChEBI" id="CHEBI:65286"/>
        <dbReference type="EC" id="2.8.2.20"/>
    </reaction>
</comment>
<comment type="subunit">
    <text evidence="2">Homodimer. Can also form heterodimers with TPST1.</text>
</comment>
<comment type="subcellular location">
    <subcellularLocation>
        <location evidence="2">Golgi apparatus membrane</location>
        <topology evidence="2">Single-pass type II membrane protein</topology>
    </subcellularLocation>
</comment>
<comment type="tissue specificity">
    <text evidence="5">Widely expressed.</text>
</comment>
<comment type="PTM">
    <text evidence="2">N-glycosylated.</text>
</comment>
<comment type="miscellaneous">
    <text evidence="1">Substrate peptides must be flexible in order to adopt an L-shaped conformation in the deep binding cleft.</text>
</comment>
<comment type="similarity">
    <text evidence="6">Belongs to the protein sulfotransferase family.</text>
</comment>
<name>TPST2_MOUSE</name>
<protein>
    <recommendedName>
        <fullName>Protein-tyrosine sulfotransferase 2</fullName>
        <ecNumber evidence="5">2.8.2.20</ecNumber>
    </recommendedName>
    <alternativeName>
        <fullName>Tyrosylprotein sulfotransferase 2</fullName>
        <shortName>TPST-2</shortName>
    </alternativeName>
</protein>
<sequence>MRLSVRKVLLAAGCALALVLAVQLGQQVLECRAVLGGTRNPRRMRPEQEELVMLGADHVEYRYGKAMPLIFVGGVPRSGTTLMRAMLDAHPEVRCGEETRIIPRVLAMRQAWTKSGREKLRLDEAGVTDEVLDAAMQAFILEVIAKHGEPARVLCNKDPFTLKSSVYLARLFPNSKFLLMVRDGRASVHSMITRKVTIAGFDLSSYRDCLTKWNKAIEVMYAQCMEVGRDKCLPVYYEQLVLHPRRSLKRILDFLGIAWSDTVLHHEDLIGKPGGVSLSKIERSTDQVIKPVNLEALSKWTGHIPRDVVRDMAQIAPMLARLGYDPYANPPNYGNPDPIVINNTHRVLKGDYKTPANLKGYFQVNQNSTSPHLGSS</sequence>
<organism>
    <name type="scientific">Mus musculus</name>
    <name type="common">Mouse</name>
    <dbReference type="NCBI Taxonomy" id="10090"/>
    <lineage>
        <taxon>Eukaryota</taxon>
        <taxon>Metazoa</taxon>
        <taxon>Chordata</taxon>
        <taxon>Craniata</taxon>
        <taxon>Vertebrata</taxon>
        <taxon>Euteleostomi</taxon>
        <taxon>Mammalia</taxon>
        <taxon>Eutheria</taxon>
        <taxon>Euarchontoglires</taxon>
        <taxon>Glires</taxon>
        <taxon>Rodentia</taxon>
        <taxon>Myomorpha</taxon>
        <taxon>Muroidea</taxon>
        <taxon>Muridae</taxon>
        <taxon>Murinae</taxon>
        <taxon>Mus</taxon>
        <taxon>Mus</taxon>
    </lineage>
</organism>
<accession>O88856</accession>
<accession>Q8CBA8</accession>
<dbReference type="EC" id="2.8.2.20" evidence="5"/>
<dbReference type="EMBL" id="AF049890">
    <property type="protein sequence ID" value="AAC36060.1"/>
    <property type="molecule type" value="mRNA"/>
</dbReference>
<dbReference type="EMBL" id="AK036436">
    <property type="protein sequence ID" value="BAC29428.1"/>
    <property type="molecule type" value="mRNA"/>
</dbReference>
<dbReference type="EMBL" id="AK075672">
    <property type="protein sequence ID" value="BAC35887.1"/>
    <property type="molecule type" value="mRNA"/>
</dbReference>
<dbReference type="EMBL" id="BC003721">
    <property type="protein sequence ID" value="AAH03721.1"/>
    <property type="molecule type" value="mRNA"/>
</dbReference>
<dbReference type="RefSeq" id="NP_001313519.2">
    <property type="nucleotide sequence ID" value="NM_001326590.2"/>
</dbReference>
<dbReference type="RefSeq" id="NP_001361637.1">
    <property type="nucleotide sequence ID" value="NM_001374708.1"/>
</dbReference>
<dbReference type="RefSeq" id="NP_001361638.1">
    <property type="nucleotide sequence ID" value="NM_001374709.1"/>
</dbReference>
<dbReference type="RefSeq" id="NP_033445.3">
    <property type="nucleotide sequence ID" value="NM_009419.5"/>
</dbReference>
<dbReference type="SMR" id="O88856"/>
<dbReference type="FunCoup" id="O88856">
    <property type="interactions" value="375"/>
</dbReference>
<dbReference type="STRING" id="10090.ENSMUSP00000031287"/>
<dbReference type="GlyCosmos" id="O88856">
    <property type="glycosylation" value="2 sites, No reported glycans"/>
</dbReference>
<dbReference type="GlyGen" id="O88856">
    <property type="glycosylation" value="2 sites, 1 N-linked glycan (1 site)"/>
</dbReference>
<dbReference type="iPTMnet" id="O88856"/>
<dbReference type="PhosphoSitePlus" id="O88856"/>
<dbReference type="PaxDb" id="10090-ENSMUSP00000031287"/>
<dbReference type="PeptideAtlas" id="O88856"/>
<dbReference type="ProteomicsDB" id="259172"/>
<dbReference type="Pumba" id="O88856"/>
<dbReference type="Antibodypedia" id="10022">
    <property type="antibodies" value="194 antibodies from 28 providers"/>
</dbReference>
<dbReference type="DNASU" id="22022"/>
<dbReference type="Ensembl" id="ENSMUST00000031287.12">
    <property type="protein sequence ID" value="ENSMUSP00000031287.6"/>
    <property type="gene ID" value="ENSMUSG00000029344.16"/>
</dbReference>
<dbReference type="Ensembl" id="ENSMUST00000071455.7">
    <property type="protein sequence ID" value="ENSMUSP00000071399.3"/>
    <property type="gene ID" value="ENSMUSG00000029344.16"/>
</dbReference>
<dbReference type="GeneID" id="22022"/>
<dbReference type="KEGG" id="mmu:22022"/>
<dbReference type="AGR" id="MGI:1309516"/>
<dbReference type="CTD" id="8459"/>
<dbReference type="MGI" id="MGI:1309516">
    <property type="gene designation" value="Tpst2"/>
</dbReference>
<dbReference type="VEuPathDB" id="HostDB:ENSMUSG00000029344"/>
<dbReference type="eggNOG" id="KOG3988">
    <property type="taxonomic scope" value="Eukaryota"/>
</dbReference>
<dbReference type="InParanoid" id="O88856"/>
<dbReference type="OrthoDB" id="545675at2759"/>
<dbReference type="Reactome" id="R-MMU-156584">
    <property type="pathway name" value="Cytosolic sulfonation of small molecules"/>
</dbReference>
<dbReference type="Reactome" id="R-MMU-163841">
    <property type="pathway name" value="Gamma carboxylation, hypusinylation, hydroxylation, and arylsulfatase activation"/>
</dbReference>
<dbReference type="BioGRID-ORCS" id="22022">
    <property type="hits" value="1 hit in 77 CRISPR screens"/>
</dbReference>
<dbReference type="ChiTaRS" id="Tpst2">
    <property type="organism name" value="mouse"/>
</dbReference>
<dbReference type="PRO" id="PR:O88856"/>
<dbReference type="Proteomes" id="UP000000589">
    <property type="component" value="Chromosome 5"/>
</dbReference>
<dbReference type="RNAct" id="O88856">
    <property type="molecule type" value="protein"/>
</dbReference>
<dbReference type="Bgee" id="ENSMUSG00000029344">
    <property type="expression patterns" value="Expressed in adrenal gland and 248 other cell types or tissues"/>
</dbReference>
<dbReference type="ExpressionAtlas" id="O88856">
    <property type="expression patterns" value="baseline and differential"/>
</dbReference>
<dbReference type="GO" id="GO:0005783">
    <property type="term" value="C:endoplasmic reticulum"/>
    <property type="evidence" value="ECO:0007669"/>
    <property type="project" value="Ensembl"/>
</dbReference>
<dbReference type="GO" id="GO:0005796">
    <property type="term" value="C:Golgi lumen"/>
    <property type="evidence" value="ECO:0000314"/>
    <property type="project" value="MGI"/>
</dbReference>
<dbReference type="GO" id="GO:0000139">
    <property type="term" value="C:Golgi membrane"/>
    <property type="evidence" value="ECO:0007669"/>
    <property type="project" value="UniProtKB-SubCell"/>
</dbReference>
<dbReference type="GO" id="GO:0005802">
    <property type="term" value="C:trans-Golgi network"/>
    <property type="evidence" value="ECO:0000314"/>
    <property type="project" value="MGI"/>
</dbReference>
<dbReference type="GO" id="GO:0042803">
    <property type="term" value="F:protein homodimerization activity"/>
    <property type="evidence" value="ECO:0007669"/>
    <property type="project" value="Ensembl"/>
</dbReference>
<dbReference type="GO" id="GO:0008476">
    <property type="term" value="F:protein-tyrosine sulfotransferase activity"/>
    <property type="evidence" value="ECO:0000314"/>
    <property type="project" value="MGI"/>
</dbReference>
<dbReference type="GO" id="GO:0007342">
    <property type="term" value="P:fusion of sperm to egg plasma membrane involved in single fertilization"/>
    <property type="evidence" value="ECO:0000315"/>
    <property type="project" value="MGI"/>
</dbReference>
<dbReference type="GO" id="GO:0006478">
    <property type="term" value="P:peptidyl-tyrosine sulfation"/>
    <property type="evidence" value="ECO:0000250"/>
    <property type="project" value="UniProtKB"/>
</dbReference>
<dbReference type="GO" id="GO:0060468">
    <property type="term" value="P:prevention of polyspermy"/>
    <property type="evidence" value="ECO:0000315"/>
    <property type="project" value="MGI"/>
</dbReference>
<dbReference type="FunFam" id="3.40.50.300:FF:000290">
    <property type="entry name" value="Protein-tyrosine sulfotransferase"/>
    <property type="match status" value="1"/>
</dbReference>
<dbReference type="Gene3D" id="3.40.50.300">
    <property type="entry name" value="P-loop containing nucleotide triphosphate hydrolases"/>
    <property type="match status" value="1"/>
</dbReference>
<dbReference type="InterPro" id="IPR027417">
    <property type="entry name" value="P-loop_NTPase"/>
</dbReference>
<dbReference type="InterPro" id="IPR026634">
    <property type="entry name" value="TPST-like"/>
</dbReference>
<dbReference type="PANTHER" id="PTHR12788">
    <property type="entry name" value="PROTEIN-TYROSINE SULFOTRANSFERASE 2"/>
    <property type="match status" value="1"/>
</dbReference>
<dbReference type="PANTHER" id="PTHR12788:SF6">
    <property type="entry name" value="PROTEIN-TYROSINE SULFOTRANSFERASE 2"/>
    <property type="match status" value="1"/>
</dbReference>
<dbReference type="Pfam" id="PF13469">
    <property type="entry name" value="Sulfotransfer_3"/>
    <property type="match status" value="1"/>
</dbReference>
<dbReference type="SUPFAM" id="SSF52540">
    <property type="entry name" value="P-loop containing nucleoside triphosphate hydrolases"/>
    <property type="match status" value="1"/>
</dbReference>
<reference key="1">
    <citation type="journal article" date="1998" name="J. Biol. Chem.">
        <title>Molecular cloning and expression of human and mouse tyrosylprotein sulfotransferase-2 and a tyrosylprotein sulfotransferase homologue in Caenorhabditis elegans.</title>
        <authorList>
            <person name="Ouyang Y.-B."/>
            <person name="Moore K.L."/>
        </authorList>
    </citation>
    <scope>NUCLEOTIDE SEQUENCE [MRNA]</scope>
    <scope>CATALYTIC ACTIVITY</scope>
    <scope>FUNCTION</scope>
    <scope>TISSUE SPECIFICITY</scope>
</reference>
<reference key="2">
    <citation type="journal article" date="2005" name="Science">
        <title>The transcriptional landscape of the mammalian genome.</title>
        <authorList>
            <person name="Carninci P."/>
            <person name="Kasukawa T."/>
            <person name="Katayama S."/>
            <person name="Gough J."/>
            <person name="Frith M.C."/>
            <person name="Maeda N."/>
            <person name="Oyama R."/>
            <person name="Ravasi T."/>
            <person name="Lenhard B."/>
            <person name="Wells C."/>
            <person name="Kodzius R."/>
            <person name="Shimokawa K."/>
            <person name="Bajic V.B."/>
            <person name="Brenner S.E."/>
            <person name="Batalov S."/>
            <person name="Forrest A.R."/>
            <person name="Zavolan M."/>
            <person name="Davis M.J."/>
            <person name="Wilming L.G."/>
            <person name="Aidinis V."/>
            <person name="Allen J.E."/>
            <person name="Ambesi-Impiombato A."/>
            <person name="Apweiler R."/>
            <person name="Aturaliya R.N."/>
            <person name="Bailey T.L."/>
            <person name="Bansal M."/>
            <person name="Baxter L."/>
            <person name="Beisel K.W."/>
            <person name="Bersano T."/>
            <person name="Bono H."/>
            <person name="Chalk A.M."/>
            <person name="Chiu K.P."/>
            <person name="Choudhary V."/>
            <person name="Christoffels A."/>
            <person name="Clutterbuck D.R."/>
            <person name="Crowe M.L."/>
            <person name="Dalla E."/>
            <person name="Dalrymple B.P."/>
            <person name="de Bono B."/>
            <person name="Della Gatta G."/>
            <person name="di Bernardo D."/>
            <person name="Down T."/>
            <person name="Engstrom P."/>
            <person name="Fagiolini M."/>
            <person name="Faulkner G."/>
            <person name="Fletcher C.F."/>
            <person name="Fukushima T."/>
            <person name="Furuno M."/>
            <person name="Futaki S."/>
            <person name="Gariboldi M."/>
            <person name="Georgii-Hemming P."/>
            <person name="Gingeras T.R."/>
            <person name="Gojobori T."/>
            <person name="Green R.E."/>
            <person name="Gustincich S."/>
            <person name="Harbers M."/>
            <person name="Hayashi Y."/>
            <person name="Hensch T.K."/>
            <person name="Hirokawa N."/>
            <person name="Hill D."/>
            <person name="Huminiecki L."/>
            <person name="Iacono M."/>
            <person name="Ikeo K."/>
            <person name="Iwama A."/>
            <person name="Ishikawa T."/>
            <person name="Jakt M."/>
            <person name="Kanapin A."/>
            <person name="Katoh M."/>
            <person name="Kawasawa Y."/>
            <person name="Kelso J."/>
            <person name="Kitamura H."/>
            <person name="Kitano H."/>
            <person name="Kollias G."/>
            <person name="Krishnan S.P."/>
            <person name="Kruger A."/>
            <person name="Kummerfeld S.K."/>
            <person name="Kurochkin I.V."/>
            <person name="Lareau L.F."/>
            <person name="Lazarevic D."/>
            <person name="Lipovich L."/>
            <person name="Liu J."/>
            <person name="Liuni S."/>
            <person name="McWilliam S."/>
            <person name="Madan Babu M."/>
            <person name="Madera M."/>
            <person name="Marchionni L."/>
            <person name="Matsuda H."/>
            <person name="Matsuzawa S."/>
            <person name="Miki H."/>
            <person name="Mignone F."/>
            <person name="Miyake S."/>
            <person name="Morris K."/>
            <person name="Mottagui-Tabar S."/>
            <person name="Mulder N."/>
            <person name="Nakano N."/>
            <person name="Nakauchi H."/>
            <person name="Ng P."/>
            <person name="Nilsson R."/>
            <person name="Nishiguchi S."/>
            <person name="Nishikawa S."/>
            <person name="Nori F."/>
            <person name="Ohara O."/>
            <person name="Okazaki Y."/>
            <person name="Orlando V."/>
            <person name="Pang K.C."/>
            <person name="Pavan W.J."/>
            <person name="Pavesi G."/>
            <person name="Pesole G."/>
            <person name="Petrovsky N."/>
            <person name="Piazza S."/>
            <person name="Reed J."/>
            <person name="Reid J.F."/>
            <person name="Ring B.Z."/>
            <person name="Ringwald M."/>
            <person name="Rost B."/>
            <person name="Ruan Y."/>
            <person name="Salzberg S.L."/>
            <person name="Sandelin A."/>
            <person name="Schneider C."/>
            <person name="Schoenbach C."/>
            <person name="Sekiguchi K."/>
            <person name="Semple C.A."/>
            <person name="Seno S."/>
            <person name="Sessa L."/>
            <person name="Sheng Y."/>
            <person name="Shibata Y."/>
            <person name="Shimada H."/>
            <person name="Shimada K."/>
            <person name="Silva D."/>
            <person name="Sinclair B."/>
            <person name="Sperling S."/>
            <person name="Stupka E."/>
            <person name="Sugiura K."/>
            <person name="Sultana R."/>
            <person name="Takenaka Y."/>
            <person name="Taki K."/>
            <person name="Tammoja K."/>
            <person name="Tan S.L."/>
            <person name="Tang S."/>
            <person name="Taylor M.S."/>
            <person name="Tegner J."/>
            <person name="Teichmann S.A."/>
            <person name="Ueda H.R."/>
            <person name="van Nimwegen E."/>
            <person name="Verardo R."/>
            <person name="Wei C.L."/>
            <person name="Yagi K."/>
            <person name="Yamanishi H."/>
            <person name="Zabarovsky E."/>
            <person name="Zhu S."/>
            <person name="Zimmer A."/>
            <person name="Hide W."/>
            <person name="Bult C."/>
            <person name="Grimmond S.M."/>
            <person name="Teasdale R.D."/>
            <person name="Liu E.T."/>
            <person name="Brusic V."/>
            <person name="Quackenbush J."/>
            <person name="Wahlestedt C."/>
            <person name="Mattick J.S."/>
            <person name="Hume D.A."/>
            <person name="Kai C."/>
            <person name="Sasaki D."/>
            <person name="Tomaru Y."/>
            <person name="Fukuda S."/>
            <person name="Kanamori-Katayama M."/>
            <person name="Suzuki M."/>
            <person name="Aoki J."/>
            <person name="Arakawa T."/>
            <person name="Iida J."/>
            <person name="Imamura K."/>
            <person name="Itoh M."/>
            <person name="Kato T."/>
            <person name="Kawaji H."/>
            <person name="Kawagashira N."/>
            <person name="Kawashima T."/>
            <person name="Kojima M."/>
            <person name="Kondo S."/>
            <person name="Konno H."/>
            <person name="Nakano K."/>
            <person name="Ninomiya N."/>
            <person name="Nishio T."/>
            <person name="Okada M."/>
            <person name="Plessy C."/>
            <person name="Shibata K."/>
            <person name="Shiraki T."/>
            <person name="Suzuki S."/>
            <person name="Tagami M."/>
            <person name="Waki K."/>
            <person name="Watahiki A."/>
            <person name="Okamura-Oho Y."/>
            <person name="Suzuki H."/>
            <person name="Kawai J."/>
            <person name="Hayashizaki Y."/>
        </authorList>
    </citation>
    <scope>NUCLEOTIDE SEQUENCE [LARGE SCALE MRNA]</scope>
    <source>
        <strain>C57BL/6J</strain>
        <tissue>Bone</tissue>
        <tissue>Embryo</tissue>
    </source>
</reference>
<reference key="3">
    <citation type="journal article" date="2004" name="Genome Res.">
        <title>The status, quality, and expansion of the NIH full-length cDNA project: the Mammalian Gene Collection (MGC).</title>
        <authorList>
            <consortium name="The MGC Project Team"/>
        </authorList>
    </citation>
    <scope>NUCLEOTIDE SEQUENCE [LARGE SCALE MRNA]</scope>
    <source>
        <strain>Czech II</strain>
        <tissue>Mammary gland</tissue>
    </source>
</reference>
<reference key="4">
    <citation type="journal article" date="2009" name="Nat. Biotechnol.">
        <title>Mass-spectrometric identification and relative quantification of N-linked cell surface glycoproteins.</title>
        <authorList>
            <person name="Wollscheid B."/>
            <person name="Bausch-Fluck D."/>
            <person name="Henderson C."/>
            <person name="O'Brien R."/>
            <person name="Bibel M."/>
            <person name="Schiess R."/>
            <person name="Aebersold R."/>
            <person name="Watts J.D."/>
        </authorList>
    </citation>
    <scope>GLYCOSYLATION [LARGE SCALE ANALYSIS] AT ASN-342</scope>
</reference>
<feature type="chain" id="PRO_0000189830" description="Protein-tyrosine sulfotransferase 2">
    <location>
        <begin position="1"/>
        <end position="376"/>
    </location>
</feature>
<feature type="topological domain" description="Cytoplasmic" evidence="3">
    <location>
        <begin position="1"/>
        <end position="8"/>
    </location>
</feature>
<feature type="transmembrane region" description="Helical; Signal-anchor for type II membrane protein" evidence="3">
    <location>
        <begin position="9"/>
        <end position="25"/>
    </location>
</feature>
<feature type="topological domain" description="Lumenal" evidence="3">
    <location>
        <begin position="26"/>
        <end position="376"/>
    </location>
</feature>
<feature type="region of interest" description="Interaction with peptide substrate" evidence="2">
    <location>
        <begin position="100"/>
        <end position="104"/>
    </location>
</feature>
<feature type="active site" description="Proton donor/acceptor" evidence="2">
    <location>
        <position position="98"/>
    </location>
</feature>
<feature type="binding site" evidence="2">
    <location>
        <begin position="77"/>
        <end position="81"/>
    </location>
    <ligand>
        <name>3'-phosphoadenylyl sulfate</name>
        <dbReference type="ChEBI" id="CHEBI:58339"/>
    </ligand>
</feature>
<feature type="binding site" evidence="2">
    <location>
        <position position="182"/>
    </location>
    <ligand>
        <name>3'-phosphoadenylyl sulfate</name>
        <dbReference type="ChEBI" id="CHEBI:58339"/>
    </ligand>
</feature>
<feature type="binding site" evidence="2">
    <location>
        <position position="190"/>
    </location>
    <ligand>
        <name>3'-phosphoadenylyl sulfate</name>
        <dbReference type="ChEBI" id="CHEBI:58339"/>
    </ligand>
</feature>
<feature type="binding site" evidence="2">
    <location>
        <position position="194"/>
    </location>
    <ligand>
        <name>3'-phosphoadenylyl sulfate</name>
        <dbReference type="ChEBI" id="CHEBI:58339"/>
    </ligand>
</feature>
<feature type="binding site" evidence="2">
    <location>
        <position position="237"/>
    </location>
    <ligand>
        <name>3'-phosphoadenylyl sulfate</name>
        <dbReference type="ChEBI" id="CHEBI:58339"/>
    </ligand>
</feature>
<feature type="binding site" evidence="2">
    <location>
        <begin position="284"/>
        <end position="293"/>
    </location>
    <ligand>
        <name>3'-phosphoadenylyl sulfate</name>
        <dbReference type="ChEBI" id="CHEBI:58339"/>
    </ligand>
</feature>
<feature type="binding site" evidence="2">
    <location>
        <position position="299"/>
    </location>
    <ligand>
        <name>3'-phosphoadenylyl sulfate</name>
        <dbReference type="ChEBI" id="CHEBI:58339"/>
    </ligand>
</feature>
<feature type="site" description="Transition state stabilizer" evidence="2">
    <location>
        <position position="157"/>
    </location>
</feature>
<feature type="site" description="Transition state stabilizer" evidence="2">
    <location>
        <position position="284"/>
    </location>
</feature>
<feature type="glycosylation site" description="N-linked (GlcNAc...) asparagine" evidence="4">
    <location>
        <position position="342"/>
    </location>
</feature>
<feature type="glycosylation site" description="N-linked (GlcNAc...) asparagine" evidence="3">
    <location>
        <position position="367"/>
    </location>
</feature>
<feature type="disulfide bond" evidence="2">
    <location>
        <begin position="95"/>
        <end position="155"/>
    </location>
</feature>
<feature type="disulfide bond" evidence="2">
    <location>
        <begin position="224"/>
        <end position="232"/>
    </location>
</feature>
<feature type="sequence conflict" description="In Ref. 2; BAC29428." evidence="6" ref="2">
    <original>A</original>
    <variation>S</variation>
    <location>
        <position position="89"/>
    </location>
</feature>
<proteinExistence type="evidence at protein level"/>
<evidence type="ECO:0000250" key="1"/>
<evidence type="ECO:0000250" key="2">
    <source>
        <dbReference type="UniProtKB" id="O60704"/>
    </source>
</evidence>
<evidence type="ECO:0000255" key="3"/>
<evidence type="ECO:0000269" key="4">
    <source>
    </source>
</evidence>
<evidence type="ECO:0000269" key="5">
    <source>
    </source>
</evidence>
<evidence type="ECO:0000305" key="6"/>
<keyword id="KW-1015">Disulfide bond</keyword>
<keyword id="KW-0325">Glycoprotein</keyword>
<keyword id="KW-0333">Golgi apparatus</keyword>
<keyword id="KW-0472">Membrane</keyword>
<keyword id="KW-1185">Reference proteome</keyword>
<keyword id="KW-0735">Signal-anchor</keyword>
<keyword id="KW-0808">Transferase</keyword>
<keyword id="KW-0812">Transmembrane</keyword>
<keyword id="KW-1133">Transmembrane helix</keyword>
<gene>
    <name type="primary">Tpst2</name>
    <name type="synonym">D5ucla3</name>
</gene>